<proteinExistence type="inferred from homology"/>
<keyword id="KW-0325">Glycoprotein</keyword>
<keyword id="KW-0378">Hydrolase</keyword>
<keyword id="KW-0479">Metal-binding</keyword>
<keyword id="KW-0645">Protease</keyword>
<keyword id="KW-1185">Reference proteome</keyword>
<keyword id="KW-0964">Secreted</keyword>
<keyword id="KW-0732">Signal</keyword>
<keyword id="KW-0862">Zinc</keyword>
<reference key="1">
    <citation type="journal article" date="2011" name="PLoS Genet.">
        <title>Comparative genomic analysis of human fungal pathogens causing paracoccidioidomycosis.</title>
        <authorList>
            <person name="Desjardins C.A."/>
            <person name="Champion M.D."/>
            <person name="Holder J.W."/>
            <person name="Muszewska A."/>
            <person name="Goldberg J."/>
            <person name="Bailao A.M."/>
            <person name="Brigido M.M."/>
            <person name="Ferreira M.E."/>
            <person name="Garcia A.M."/>
            <person name="Grynberg M."/>
            <person name="Gujja S."/>
            <person name="Heiman D.I."/>
            <person name="Henn M.R."/>
            <person name="Kodira C.D."/>
            <person name="Leon-Narvaez H."/>
            <person name="Longo L.V.G."/>
            <person name="Ma L.-J."/>
            <person name="Malavazi I."/>
            <person name="Matsuo A.L."/>
            <person name="Morais F.V."/>
            <person name="Pereira M."/>
            <person name="Rodriguez-Brito S."/>
            <person name="Sakthikumar S."/>
            <person name="Salem-Izacc S.M."/>
            <person name="Sykes S.M."/>
            <person name="Teixeira M.M."/>
            <person name="Vallejo M.C."/>
            <person name="Walter M.E."/>
            <person name="Yandava C."/>
            <person name="Young S."/>
            <person name="Zeng Q."/>
            <person name="Zucker J."/>
            <person name="Felipe M.S."/>
            <person name="Goldman G.H."/>
            <person name="Haas B.J."/>
            <person name="McEwen J.G."/>
            <person name="Nino-Vega G."/>
            <person name="Puccia R."/>
            <person name="San-Blas G."/>
            <person name="Soares C.M."/>
            <person name="Birren B.W."/>
            <person name="Cuomo C.A."/>
        </authorList>
    </citation>
    <scope>NUCLEOTIDE SEQUENCE [LARGE SCALE GENOMIC DNA]</scope>
    <source>
        <strain>Pb18</strain>
    </source>
</reference>
<accession>C1G9X6</accession>
<evidence type="ECO:0000250" key="1"/>
<evidence type="ECO:0000255" key="2"/>
<evidence type="ECO:0000305" key="3"/>
<dbReference type="EC" id="3.4.17.-"/>
<dbReference type="EMBL" id="KN275960">
    <property type="protein sequence ID" value="EEH47978.1"/>
    <property type="molecule type" value="Genomic_DNA"/>
</dbReference>
<dbReference type="RefSeq" id="XP_010759703.1">
    <property type="nucleotide sequence ID" value="XM_010761401.1"/>
</dbReference>
<dbReference type="SMR" id="C1G9X6"/>
<dbReference type="STRING" id="502780.C1G9X6"/>
<dbReference type="GeneID" id="22583257"/>
<dbReference type="KEGG" id="pbn:PADG_04062"/>
<dbReference type="VEuPathDB" id="FungiDB:PADG_04062"/>
<dbReference type="eggNOG" id="KOG2275">
    <property type="taxonomic scope" value="Eukaryota"/>
</dbReference>
<dbReference type="HOGENOM" id="CLU_021802_3_0_1"/>
<dbReference type="InParanoid" id="C1G9X6"/>
<dbReference type="OMA" id="RLHKGVM"/>
<dbReference type="OrthoDB" id="36099at33183"/>
<dbReference type="Proteomes" id="UP000001628">
    <property type="component" value="Unassembled WGS sequence"/>
</dbReference>
<dbReference type="GO" id="GO:0005576">
    <property type="term" value="C:extracellular region"/>
    <property type="evidence" value="ECO:0007669"/>
    <property type="project" value="UniProtKB-SubCell"/>
</dbReference>
<dbReference type="GO" id="GO:0046872">
    <property type="term" value="F:metal ion binding"/>
    <property type="evidence" value="ECO:0007669"/>
    <property type="project" value="UniProtKB-KW"/>
</dbReference>
<dbReference type="GO" id="GO:0008233">
    <property type="term" value="F:peptidase activity"/>
    <property type="evidence" value="ECO:0007669"/>
    <property type="project" value="UniProtKB-KW"/>
</dbReference>
<dbReference type="GO" id="GO:0006508">
    <property type="term" value="P:proteolysis"/>
    <property type="evidence" value="ECO:0007669"/>
    <property type="project" value="UniProtKB-KW"/>
</dbReference>
<dbReference type="CDD" id="cd05652">
    <property type="entry name" value="M20_ArgE_DapE-like_fungal"/>
    <property type="match status" value="1"/>
</dbReference>
<dbReference type="Gene3D" id="3.30.70.360">
    <property type="match status" value="1"/>
</dbReference>
<dbReference type="Gene3D" id="3.40.630.10">
    <property type="entry name" value="Zn peptidases"/>
    <property type="match status" value="1"/>
</dbReference>
<dbReference type="InterPro" id="IPR036264">
    <property type="entry name" value="Bact_exopeptidase_dim_dom"/>
</dbReference>
<dbReference type="InterPro" id="IPR002933">
    <property type="entry name" value="Peptidase_M20"/>
</dbReference>
<dbReference type="InterPro" id="IPR011650">
    <property type="entry name" value="Peptidase_M20_dimer"/>
</dbReference>
<dbReference type="InterPro" id="IPR050072">
    <property type="entry name" value="Peptidase_M20A"/>
</dbReference>
<dbReference type="PANTHER" id="PTHR43808">
    <property type="entry name" value="ACETYLORNITHINE DEACETYLASE"/>
    <property type="match status" value="1"/>
</dbReference>
<dbReference type="PANTHER" id="PTHR43808:SF8">
    <property type="entry name" value="PEPTIDASE M20 DIMERISATION DOMAIN-CONTAINING PROTEIN"/>
    <property type="match status" value="1"/>
</dbReference>
<dbReference type="Pfam" id="PF07687">
    <property type="entry name" value="M20_dimer"/>
    <property type="match status" value="1"/>
</dbReference>
<dbReference type="Pfam" id="PF01546">
    <property type="entry name" value="Peptidase_M20"/>
    <property type="match status" value="1"/>
</dbReference>
<dbReference type="SUPFAM" id="SSF55031">
    <property type="entry name" value="Bacterial exopeptidase dimerisation domain"/>
    <property type="match status" value="1"/>
</dbReference>
<dbReference type="SUPFAM" id="SSF53187">
    <property type="entry name" value="Zn-dependent exopeptidases"/>
    <property type="match status" value="1"/>
</dbReference>
<feature type="signal peptide" evidence="2">
    <location>
        <begin position="1"/>
        <end position="20"/>
    </location>
</feature>
<feature type="chain" id="PRO_0000411238" description="Probable carboxypeptidase PADG_04062">
    <location>
        <begin position="21"/>
        <end position="442"/>
    </location>
</feature>
<feature type="active site" description="Proton acceptor" evidence="1">
    <location>
        <position position="192"/>
    </location>
</feature>
<feature type="binding site" evidence="1">
    <location>
        <position position="160"/>
    </location>
    <ligand>
        <name>Zn(2+)</name>
        <dbReference type="ChEBI" id="CHEBI:29105"/>
        <label>1</label>
    </ligand>
</feature>
<feature type="binding site" evidence="1">
    <location>
        <position position="160"/>
    </location>
    <ligand>
        <name>Zn(2+)</name>
        <dbReference type="ChEBI" id="CHEBI:29105"/>
        <label>2</label>
    </ligand>
</feature>
<feature type="binding site" evidence="1">
    <location>
        <position position="193"/>
    </location>
    <ligand>
        <name>Zn(2+)</name>
        <dbReference type="ChEBI" id="CHEBI:29105"/>
        <label>1</label>
    </ligand>
</feature>
<feature type="glycosylation site" description="N-linked (GlcNAc...) asparagine" evidence="2">
    <location>
        <position position="102"/>
    </location>
</feature>
<feature type="glycosylation site" description="N-linked (GlcNAc...) asparagine" evidence="2">
    <location>
        <position position="343"/>
    </location>
</feature>
<sequence length="442" mass="47873">MKLQYLVALLSVQAVPPVTAGYIHQYALVGSVIRQPIDQKTQRENLNKLVSDSPLLSLHRTICEIESVSNREGAVGEVLLKYLRDRGFTVEKQIVPADRGTNSTAERFNIWAYPKGCPRPKIILTSHIDTVPPHIKYSLHAPDGDFDRAKVRIMGRGTVDAKASVAAQIIAALKHLKSNKDIPLGLLFVVSEEVGGSGMVHFSNSELNTNPPFFHTLIFGEPTDLTLVDGHKGNLRVTIEAKGVAAHSGYPWLGRSAISEILPILARMDELGDIPVETGGLPSSEKYGRTTVNIGTIKGGAADNVVPETASASIAVRLAAGTPEEAEEIIRRAVHDVSGGSTNITVNFPDSMPYPPIDLDVDVEGFDISTVNYGTDIPKLEIHDEELEVKVKRYLYGPGTIFVAHGAEEGITVGDLEKAVEGYSKLIDAAVKRGWPREVVVN</sequence>
<protein>
    <recommendedName>
        <fullName>Probable carboxypeptidase PADG_04062</fullName>
        <ecNumber>3.4.17.-</ecNumber>
    </recommendedName>
    <alternativeName>
        <fullName>Peptidase M20 domain-containing protein PADG_04062</fullName>
    </alternativeName>
</protein>
<organism>
    <name type="scientific">Paracoccidioides brasiliensis (strain Pb18)</name>
    <dbReference type="NCBI Taxonomy" id="502780"/>
    <lineage>
        <taxon>Eukaryota</taxon>
        <taxon>Fungi</taxon>
        <taxon>Dikarya</taxon>
        <taxon>Ascomycota</taxon>
        <taxon>Pezizomycotina</taxon>
        <taxon>Eurotiomycetes</taxon>
        <taxon>Eurotiomycetidae</taxon>
        <taxon>Onygenales</taxon>
        <taxon>Ajellomycetaceae</taxon>
        <taxon>Paracoccidioides</taxon>
    </lineage>
</organism>
<comment type="cofactor">
    <cofactor evidence="1">
        <name>Zn(2+)</name>
        <dbReference type="ChEBI" id="CHEBI:29105"/>
    </cofactor>
    <text evidence="1">Binds 2 Zn(2+) ions per subunit.</text>
</comment>
<comment type="subcellular location">
    <subcellularLocation>
        <location evidence="3">Secreted</location>
    </subcellularLocation>
</comment>
<comment type="similarity">
    <text evidence="3">Belongs to the peptidase M20A family.</text>
</comment>
<gene>
    <name type="ORF">PADG_04062</name>
</gene>
<name>P20D1_PARBD</name>